<organism>
    <name type="scientific">Planktothrix agardhii</name>
    <name type="common">Oscillatoria agardhii</name>
    <dbReference type="NCBI Taxonomy" id="1160"/>
    <lineage>
        <taxon>Bacteria</taxon>
        <taxon>Bacillati</taxon>
        <taxon>Cyanobacteriota</taxon>
        <taxon>Cyanophyceae</taxon>
        <taxon>Oscillatoriophycideae</taxon>
        <taxon>Oscillatoriales</taxon>
        <taxon>Microcoleaceae</taxon>
        <taxon>Planktothrix</taxon>
    </lineage>
</organism>
<keyword id="KW-0002">3D-structure</keyword>
<keyword id="KW-0903">Direct protein sequencing</keyword>
<keyword id="KW-0348">Hemagglutinin</keyword>
<keyword id="KW-0430">Lectin</keyword>
<keyword id="KW-0465">Mannose-binding</keyword>
<keyword id="KW-0677">Repeat</keyword>
<dbReference type="PDB" id="2MWH">
    <property type="method" value="NMR"/>
    <property type="chains" value="A=1-130"/>
</dbReference>
<dbReference type="PDB" id="3S5V">
    <property type="method" value="X-ray"/>
    <property type="resolution" value="1.55 A"/>
    <property type="chains" value="A=1-130"/>
</dbReference>
<dbReference type="PDB" id="3S5X">
    <property type="method" value="X-ray"/>
    <property type="resolution" value="1.65 A"/>
    <property type="chains" value="A=1-130"/>
</dbReference>
<dbReference type="PDB" id="3S60">
    <property type="method" value="X-ray"/>
    <property type="resolution" value="1.60 A"/>
    <property type="chains" value="A=1-130"/>
</dbReference>
<dbReference type="PDB" id="9AUQ">
    <property type="method" value="X-ray"/>
    <property type="resolution" value="2.37 A"/>
    <property type="chains" value="A/B=1-130"/>
</dbReference>
<dbReference type="PDB" id="9B4V">
    <property type="method" value="NMR"/>
    <property type="chains" value="A=1-130"/>
</dbReference>
<dbReference type="PDB" id="9B4W">
    <property type="method" value="NMR"/>
    <property type="chains" value="A=1-130"/>
</dbReference>
<dbReference type="PDBsum" id="2MWH"/>
<dbReference type="PDBsum" id="3S5V"/>
<dbReference type="PDBsum" id="3S5X"/>
<dbReference type="PDBsum" id="3S60"/>
<dbReference type="PDBsum" id="9AUQ"/>
<dbReference type="PDBsum" id="9B4V"/>
<dbReference type="PDBsum" id="9B4W"/>
<dbReference type="BMRB" id="P84330"/>
<dbReference type="SMR" id="P84330"/>
<dbReference type="UniLectin" id="P84330"/>
<dbReference type="EvolutionaryTrace" id="P84330"/>
<dbReference type="GO" id="GO:0005537">
    <property type="term" value="F:D-mannose binding"/>
    <property type="evidence" value="ECO:0007669"/>
    <property type="project" value="UniProtKB-KW"/>
</dbReference>
<dbReference type="Gene3D" id="2.40.128.450">
    <property type="match status" value="1"/>
</dbReference>
<dbReference type="InterPro" id="IPR053726">
    <property type="entry name" value="Bacterial_Lectin_Domain_sf"/>
</dbReference>
<dbReference type="InterPro" id="IPR040964">
    <property type="entry name" value="SBD"/>
</dbReference>
<dbReference type="Pfam" id="PF17882">
    <property type="entry name" value="SBD"/>
    <property type="match status" value="2"/>
</dbReference>
<accession>P84330</accession>
<evidence type="ECO:0000255" key="1"/>
<evidence type="ECO:0000269" key="2">
    <source>
    </source>
</evidence>
<evidence type="ECO:0000269" key="3">
    <source>
    </source>
</evidence>
<evidence type="ECO:0000305" key="4"/>
<evidence type="ECO:0007829" key="5">
    <source>
        <dbReference type="PDB" id="2MWH"/>
    </source>
</evidence>
<evidence type="ECO:0007829" key="6">
    <source>
        <dbReference type="PDB" id="3S5V"/>
    </source>
</evidence>
<evidence type="ECO:0007829" key="7">
    <source>
        <dbReference type="PDB" id="3S60"/>
    </source>
</evidence>
<reference evidence="4" key="1">
    <citation type="journal article" date="2007" name="J. Biol. Chem.">
        <title>Primary structure and carbohydrate binding specificity of a potent anti-HIV lectin isolated from the filamentous cyanobacterium Oscillatoria agardhii.</title>
        <authorList>
            <person name="Sato Y."/>
            <person name="Okuyama S."/>
            <person name="Hori K."/>
        </authorList>
    </citation>
    <scope>PROTEIN SEQUENCE</scope>
    <scope>FUNCTION</scope>
    <scope>MASS SPECTROMETRY</scope>
    <source>
        <strain>NIES-204 / IAM M-244 / CCAP 1460/5 / PCC 10704</strain>
    </source>
</reference>
<reference evidence="4" key="2">
    <citation type="journal article" date="2000" name="Comp. Biochem. Physiol.">
        <title>Purification and characterization of a novel lectin from a freshwater cyanobacterium, Oscillatoria agardhii.</title>
        <authorList>
            <person name="Sato Y."/>
            <person name="Murakami M."/>
            <person name="Miyazawa K."/>
            <person name="Hori K."/>
        </authorList>
    </citation>
    <scope>PROTEIN SEQUENCE OF 1-20</scope>
    <scope>FUNCTION</scope>
    <scope>BIOPHYSICOCHEMICAL PROPERTIES</scope>
    <scope>SUBUNIT</scope>
    <source>
        <strain>NIES-204 / IAM M-244 / CCAP 1460/5 / PCC 10704</strain>
    </source>
</reference>
<feature type="chain" id="PRO_0000282941" description="Lectin OAA">
    <location>
        <begin position="1"/>
        <end position="132"/>
    </location>
</feature>
<feature type="repeat" description="1" evidence="1">
    <location>
        <begin position="1"/>
        <end position="66"/>
    </location>
</feature>
<feature type="repeat" description="2" evidence="1">
    <location>
        <begin position="67"/>
        <end position="132"/>
    </location>
</feature>
<feature type="region of interest" description="2 X approximate tandem repeats" evidence="1">
    <location>
        <begin position="1"/>
        <end position="132"/>
    </location>
</feature>
<feature type="strand" evidence="6">
    <location>
        <begin position="2"/>
        <end position="8"/>
    </location>
</feature>
<feature type="strand" evidence="6">
    <location>
        <begin position="16"/>
        <end position="23"/>
    </location>
</feature>
<feature type="strand" evidence="6">
    <location>
        <begin position="32"/>
        <end position="38"/>
    </location>
</feature>
<feature type="strand" evidence="6">
    <location>
        <begin position="44"/>
        <end position="52"/>
    </location>
</feature>
<feature type="strand" evidence="6">
    <location>
        <begin position="57"/>
        <end position="66"/>
    </location>
</feature>
<feature type="strand" evidence="6">
    <location>
        <begin position="69"/>
        <end position="75"/>
    </location>
</feature>
<feature type="strand" evidence="7">
    <location>
        <begin position="79"/>
        <end position="81"/>
    </location>
</feature>
<feature type="strand" evidence="6">
    <location>
        <begin position="84"/>
        <end position="90"/>
    </location>
</feature>
<feature type="strand" evidence="5">
    <location>
        <begin position="93"/>
        <end position="96"/>
    </location>
</feature>
<feature type="strand" evidence="6">
    <location>
        <begin position="99"/>
        <end position="105"/>
    </location>
</feature>
<feature type="strand" evidence="6">
    <location>
        <begin position="111"/>
        <end position="119"/>
    </location>
</feature>
<feature type="strand" evidence="6">
    <location>
        <begin position="124"/>
        <end position="130"/>
    </location>
</feature>
<name>LEC1_PLAAG</name>
<proteinExistence type="evidence at protein level"/>
<sequence>ALYNVENQWGGSSAPWNEGGQWEIGSRSDQNVVAINVESGDDGQTLNGTMTYAGEGPIGFRATLLGNNSYEVENQWGGDSAPWHSGGNWILGSRENQNVVAINVESGDDGQTLNGTMTYAGEGPIGFKGTTL</sequence>
<protein>
    <recommendedName>
        <fullName>Lectin OAA</fullName>
    </recommendedName>
</protein>
<comment type="function">
    <text evidence="2 3">Lectin specific for high mannose N-glycans, recognizes the branched moiety of these glycans. Does not recognize other types of N-glycans or monosaccharides. Agglutinates trypsin-treated rabbit erythrocytes. Does not require divalent cations for activity. Inhibits HIV replication in MT4 cells with an EC(50) of 45 nM. Binds to the HIV envelope glycoprotein gp120.</text>
</comment>
<comment type="biophysicochemical properties">
    <phDependence>
        <text evidence="2">Stable over a wide pH range, activity is unaffected after incubation at pH 4.0-11.0.</text>
    </phDependence>
    <temperatureDependence>
        <text evidence="2">Thermostable. Activity is unaffected by heating at 80 degrees Celsius for 30 minutes, half of the original activity is retained after heating at 100 degrees Celsius for 30 minutes.</text>
    </temperatureDependence>
</comment>
<comment type="subunit">
    <text evidence="2">Monomer.</text>
</comment>
<comment type="mass spectrometry"/>
<comment type="similarity">
    <text evidence="4">Belongs to the bacterial lectin family.</text>
</comment>